<name>COJA1_HUMAN</name>
<reference key="1">
    <citation type="journal article" date="1995" name="J. Biochem.">
        <title>The mRNA for alpha 1(XIX) collagen chain, a new member of FACITs, contains a long unusual 3' untranslated region and displays many unique splicing variants.</title>
        <authorList>
            <person name="Inoguchi K."/>
            <person name="Yoshioka H."/>
            <person name="Khaleduzzaman M."/>
            <person name="Ninomiya Y."/>
        </authorList>
    </citation>
    <scope>NUCLEOTIDE SEQUENCE [MRNA]</scope>
</reference>
<reference key="2">
    <citation type="journal article" date="1997" name="Genomics">
        <title>Structure of the human type XIX collagen (COL19A1) gene, which suggests it has arisen from an ancestor gene of the FACIT family.</title>
        <authorList>
            <person name="Khaleduzzaman M."/>
            <person name="Sumiyoshi H."/>
            <person name="Ueki Y."/>
            <person name="Inoguchi K."/>
            <person name="Ninomiya Y."/>
            <person name="Yoshioka H."/>
        </authorList>
    </citation>
    <scope>NUCLEOTIDE SEQUENCE [GENOMIC DNA]</scope>
</reference>
<reference key="3">
    <citation type="journal article" date="2003" name="Nature">
        <title>The DNA sequence and analysis of human chromosome 6.</title>
        <authorList>
            <person name="Mungall A.J."/>
            <person name="Palmer S.A."/>
            <person name="Sims S.K."/>
            <person name="Edwards C.A."/>
            <person name="Ashurst J.L."/>
            <person name="Wilming L."/>
            <person name="Jones M.C."/>
            <person name="Horton R."/>
            <person name="Hunt S.E."/>
            <person name="Scott C.E."/>
            <person name="Gilbert J.G.R."/>
            <person name="Clamp M.E."/>
            <person name="Bethel G."/>
            <person name="Milne S."/>
            <person name="Ainscough R."/>
            <person name="Almeida J.P."/>
            <person name="Ambrose K.D."/>
            <person name="Andrews T.D."/>
            <person name="Ashwell R.I.S."/>
            <person name="Babbage A.K."/>
            <person name="Bagguley C.L."/>
            <person name="Bailey J."/>
            <person name="Banerjee R."/>
            <person name="Barker D.J."/>
            <person name="Barlow K.F."/>
            <person name="Bates K."/>
            <person name="Beare D.M."/>
            <person name="Beasley H."/>
            <person name="Beasley O."/>
            <person name="Bird C.P."/>
            <person name="Blakey S.E."/>
            <person name="Bray-Allen S."/>
            <person name="Brook J."/>
            <person name="Brown A.J."/>
            <person name="Brown J.Y."/>
            <person name="Burford D.C."/>
            <person name="Burrill W."/>
            <person name="Burton J."/>
            <person name="Carder C."/>
            <person name="Carter N.P."/>
            <person name="Chapman J.C."/>
            <person name="Clark S.Y."/>
            <person name="Clark G."/>
            <person name="Clee C.M."/>
            <person name="Clegg S."/>
            <person name="Cobley V."/>
            <person name="Collier R.E."/>
            <person name="Collins J.E."/>
            <person name="Colman L.K."/>
            <person name="Corby N.R."/>
            <person name="Coville G.J."/>
            <person name="Culley K.M."/>
            <person name="Dhami P."/>
            <person name="Davies J."/>
            <person name="Dunn M."/>
            <person name="Earthrowl M.E."/>
            <person name="Ellington A.E."/>
            <person name="Evans K.A."/>
            <person name="Faulkner L."/>
            <person name="Francis M.D."/>
            <person name="Frankish A."/>
            <person name="Frankland J."/>
            <person name="French L."/>
            <person name="Garner P."/>
            <person name="Garnett J."/>
            <person name="Ghori M.J."/>
            <person name="Gilby L.M."/>
            <person name="Gillson C.J."/>
            <person name="Glithero R.J."/>
            <person name="Grafham D.V."/>
            <person name="Grant M."/>
            <person name="Gribble S."/>
            <person name="Griffiths C."/>
            <person name="Griffiths M.N.D."/>
            <person name="Hall R."/>
            <person name="Halls K.S."/>
            <person name="Hammond S."/>
            <person name="Harley J.L."/>
            <person name="Hart E.A."/>
            <person name="Heath P.D."/>
            <person name="Heathcott R."/>
            <person name="Holmes S.J."/>
            <person name="Howden P.J."/>
            <person name="Howe K.L."/>
            <person name="Howell G.R."/>
            <person name="Huckle E."/>
            <person name="Humphray S.J."/>
            <person name="Humphries M.D."/>
            <person name="Hunt A.R."/>
            <person name="Johnson C.M."/>
            <person name="Joy A.A."/>
            <person name="Kay M."/>
            <person name="Keenan S.J."/>
            <person name="Kimberley A.M."/>
            <person name="King A."/>
            <person name="Laird G.K."/>
            <person name="Langford C."/>
            <person name="Lawlor S."/>
            <person name="Leongamornlert D.A."/>
            <person name="Leversha M."/>
            <person name="Lloyd C.R."/>
            <person name="Lloyd D.M."/>
            <person name="Loveland J.E."/>
            <person name="Lovell J."/>
            <person name="Martin S."/>
            <person name="Mashreghi-Mohammadi M."/>
            <person name="Maslen G.L."/>
            <person name="Matthews L."/>
            <person name="McCann O.T."/>
            <person name="McLaren S.J."/>
            <person name="McLay K."/>
            <person name="McMurray A."/>
            <person name="Moore M.J.F."/>
            <person name="Mullikin J.C."/>
            <person name="Niblett D."/>
            <person name="Nickerson T."/>
            <person name="Novik K.L."/>
            <person name="Oliver K."/>
            <person name="Overton-Larty E.K."/>
            <person name="Parker A."/>
            <person name="Patel R."/>
            <person name="Pearce A.V."/>
            <person name="Peck A.I."/>
            <person name="Phillimore B.J.C.T."/>
            <person name="Phillips S."/>
            <person name="Plumb R.W."/>
            <person name="Porter K.M."/>
            <person name="Ramsey Y."/>
            <person name="Ranby S.A."/>
            <person name="Rice C.M."/>
            <person name="Ross M.T."/>
            <person name="Searle S.M."/>
            <person name="Sehra H.K."/>
            <person name="Sheridan E."/>
            <person name="Skuce C.D."/>
            <person name="Smith S."/>
            <person name="Smith M."/>
            <person name="Spraggon L."/>
            <person name="Squares S.L."/>
            <person name="Steward C.A."/>
            <person name="Sycamore N."/>
            <person name="Tamlyn-Hall G."/>
            <person name="Tester J."/>
            <person name="Theaker A.J."/>
            <person name="Thomas D.W."/>
            <person name="Thorpe A."/>
            <person name="Tracey A."/>
            <person name="Tromans A."/>
            <person name="Tubby B."/>
            <person name="Wall M."/>
            <person name="Wallis J.M."/>
            <person name="West A.P."/>
            <person name="White S.S."/>
            <person name="Whitehead S.L."/>
            <person name="Whittaker H."/>
            <person name="Wild A."/>
            <person name="Willey D.J."/>
            <person name="Wilmer T.E."/>
            <person name="Wood J.M."/>
            <person name="Wray P.W."/>
            <person name="Wyatt J.C."/>
            <person name="Young L."/>
            <person name="Younger R.M."/>
            <person name="Bentley D.R."/>
            <person name="Coulson A."/>
            <person name="Durbin R.M."/>
            <person name="Hubbard T."/>
            <person name="Sulston J.E."/>
            <person name="Dunham I."/>
            <person name="Rogers J."/>
            <person name="Beck S."/>
        </authorList>
    </citation>
    <scope>NUCLEOTIDE SEQUENCE [LARGE SCALE GENOMIC DNA]</scope>
</reference>
<reference key="4">
    <citation type="journal article" date="2004" name="Genome Res.">
        <title>The status, quality, and expansion of the NIH full-length cDNA project: the Mammalian Gene Collection (MGC).</title>
        <authorList>
            <consortium name="The MGC Project Team"/>
        </authorList>
    </citation>
    <scope>NUCLEOTIDE SEQUENCE [LARGE SCALE MRNA]</scope>
</reference>
<reference key="5">
    <citation type="journal article" date="1992" name="Genomics">
        <title>Synteny between the loci for a novel FACIT-like collagen locus (D6S228E) and alpha 1 (IX) collagen (COL9A1) on 6q12-q14 in humans.</title>
        <authorList>
            <person name="Yoshioka H."/>
            <person name="Zhang H."/>
            <person name="Ramirez F."/>
            <person name="Mattei M.-G."/>
            <person name="Moradi-Ameli M."/>
            <person name="van der Rest M."/>
            <person name="Gordon M.K."/>
        </authorList>
    </citation>
    <scope>NUCLEOTIDE SEQUENCE [MRNA] OF 26-624</scope>
    <source>
        <tissue>Rhabdomyosarcoma</tissue>
    </source>
</reference>
<reference key="6">
    <citation type="journal article" date="1993" name="Gene">
        <title>Human cDNA clones transcribed from an unusually high-molecular-weight RNA encode a new collagen chain.</title>
        <authorList>
            <person name="Myers J.C."/>
            <person name="Sun M.J."/>
            <person name="D'Ippolito J.A."/>
            <person name="Jabs E.W."/>
            <person name="Neilson E.G."/>
            <person name="Dion A.S."/>
        </authorList>
    </citation>
    <scope>NUCLEOTIDE SEQUENCE [MRNA] OF 106-1020</scope>
</reference>
<reference key="7">
    <citation type="journal article" date="1994" name="J. Biol. Chem.">
        <title>The triple-helical region of human type XIX collagen consists of multiple collagenous subdomains and exhibits limited sequence homology to alpha 1(XVI).</title>
        <authorList>
            <person name="Myers J.C."/>
            <person name="Yang H."/>
            <person name="D'Ippolito J.A."/>
            <person name="Presente A."/>
            <person name="Miller M.K."/>
            <person name="Dion A.S."/>
        </authorList>
    </citation>
    <scope>NUCLEOTIDE SEQUENCE [MRNA] OF 738-1142</scope>
    <source>
        <tissue>Skin</tissue>
    </source>
</reference>
<reference key="8">
    <citation type="journal article" date="2003" name="J. Biol. Chem.">
        <title>Type XIX collagen purified from human umbilical cord is characterized by multiple sharp kinks delineating collagenous subdomains and by intermolecular aggregates via globular, disulfide-linked, and heparin-binding amino termini.</title>
        <authorList>
            <person name="Myers J.C."/>
            <person name="Li D."/>
            <person name="Amenta P.S."/>
            <person name="Clark C.C."/>
            <person name="Nagaswami C."/>
            <person name="Weisel J.W."/>
        </authorList>
    </citation>
    <scope>FUNCTION</scope>
    <scope>SUBUNIT</scope>
    <scope>TISSUE SPECIFICITY</scope>
    <scope>DOMAIN</scope>
</reference>
<reference key="9">
    <citation type="journal article" date="2006" name="Science">
        <title>The consensus coding sequences of human breast and colorectal cancers.</title>
        <authorList>
            <person name="Sjoeblom T."/>
            <person name="Jones S."/>
            <person name="Wood L.D."/>
            <person name="Parsons D.W."/>
            <person name="Lin J."/>
            <person name="Barber T.D."/>
            <person name="Mandelker D."/>
            <person name="Leary R.J."/>
            <person name="Ptak J."/>
            <person name="Silliman N."/>
            <person name="Szabo S."/>
            <person name="Buckhaults P."/>
            <person name="Farrell C."/>
            <person name="Meeh P."/>
            <person name="Markowitz S.D."/>
            <person name="Willis J."/>
            <person name="Dawson D."/>
            <person name="Willson J.K.V."/>
            <person name="Gazdar A.F."/>
            <person name="Hartigan J."/>
            <person name="Wu L."/>
            <person name="Liu C."/>
            <person name="Parmigiani G."/>
            <person name="Park B.H."/>
            <person name="Bachman K.E."/>
            <person name="Papadopoulos N."/>
            <person name="Vogelstein B."/>
            <person name="Kinzler K.W."/>
            <person name="Velculescu V.E."/>
        </authorList>
    </citation>
    <scope>VARIANTS [LARGE SCALE ANALYSIS] ASP-361 AND ASN-1019</scope>
</reference>
<organism>
    <name type="scientific">Homo sapiens</name>
    <name type="common">Human</name>
    <dbReference type="NCBI Taxonomy" id="9606"/>
    <lineage>
        <taxon>Eukaryota</taxon>
        <taxon>Metazoa</taxon>
        <taxon>Chordata</taxon>
        <taxon>Craniata</taxon>
        <taxon>Vertebrata</taxon>
        <taxon>Euteleostomi</taxon>
        <taxon>Mammalia</taxon>
        <taxon>Eutheria</taxon>
        <taxon>Euarchontoglires</taxon>
        <taxon>Primates</taxon>
        <taxon>Haplorrhini</taxon>
        <taxon>Catarrhini</taxon>
        <taxon>Hominidae</taxon>
        <taxon>Homo</taxon>
    </lineage>
</organism>
<comment type="function">
    <text evidence="4">May act as a cross-bridge between fibrils and other extracellular matrix molecules. Involved in skeletal myogenesis in the developing esophagus. May play a role in organization of the pericellular matrix or the sphinteric smooth muscle.</text>
</comment>
<comment type="subunit">
    <text evidence="4">Oligomer; disulfide-linked.</text>
</comment>
<comment type="subcellular location">
    <subcellularLocation>
        <location evidence="1">Secreted</location>
        <location evidence="1">Extracellular space</location>
        <location evidence="1">Extracellular matrix</location>
    </subcellularLocation>
</comment>
<comment type="tissue specificity">
    <text evidence="4">Localized to vascular, neuronal, mesenchymal, and some epithelial basement membrane zones in umbilical cord.</text>
</comment>
<comment type="domain">
    <text evidence="4">The numerous interruptions in the triple helix may make this molecule either elastic or flexible.</text>
</comment>
<comment type="PTM">
    <text>Prolines at the third position of the tripeptide repeating unit (G-X-Y) are hydroxylated in some or all of the chains.</text>
</comment>
<comment type="similarity">
    <text evidence="6">Belongs to the fibril-associated collagens with interrupted helices (FACIT) family.</text>
</comment>
<protein>
    <recommendedName>
        <fullName>Collagen alpha-1(XIX) chain</fullName>
    </recommendedName>
    <alternativeName>
        <fullName>Collagen alpha-1(Y) chain</fullName>
    </alternativeName>
</protein>
<proteinExistence type="evidence at protein level"/>
<accession>Q14993</accession>
<accession>Q00559</accession>
<accession>Q05850</accession>
<accession>Q12885</accession>
<accession>Q13676</accession>
<accession>Q14DH1</accession>
<accession>Q5JUF0</accession>
<accession>Q5T424</accession>
<accession>Q9H572</accession>
<accession>Q9NPZ2</accession>
<accession>Q9NQP2</accession>
<feature type="signal peptide" evidence="2">
    <location>
        <begin position="1"/>
        <end position="23"/>
    </location>
</feature>
<feature type="chain" id="PRO_0000005797" description="Collagen alpha-1(XIX) chain">
    <location>
        <begin position="24"/>
        <end position="1142"/>
    </location>
</feature>
<feature type="domain" description="Laminin G-like">
    <location>
        <begin position="50"/>
        <end position="234"/>
    </location>
</feature>
<feature type="domain" description="Collagen-like 1">
    <location>
        <begin position="292"/>
        <end position="349"/>
    </location>
</feature>
<feature type="domain" description="Collagen-like 2">
    <location>
        <begin position="350"/>
        <end position="391"/>
    </location>
</feature>
<feature type="domain" description="Collagen-like 3">
    <location>
        <begin position="392"/>
        <end position="433"/>
    </location>
</feature>
<feature type="domain" description="Collagen-like 4">
    <location>
        <begin position="474"/>
        <end position="516"/>
    </location>
</feature>
<feature type="domain" description="Collagen-like 5">
    <location>
        <begin position="568"/>
        <end position="624"/>
    </location>
</feature>
<feature type="domain" description="Collagen-like 6">
    <location>
        <begin position="626"/>
        <end position="678"/>
    </location>
</feature>
<feature type="domain" description="Collagen-like 7">
    <location>
        <begin position="728"/>
        <end position="778"/>
    </location>
</feature>
<feature type="domain" description="Collagen-like 8">
    <location>
        <begin position="779"/>
        <end position="814"/>
    </location>
</feature>
<feature type="domain" description="Collagen-like 9">
    <location>
        <begin position="845"/>
        <end position="903"/>
    </location>
</feature>
<feature type="domain" description="Collagen-like 10">
    <location>
        <begin position="904"/>
        <end position="947"/>
    </location>
</feature>
<feature type="domain" description="Collagen-like 11">
    <location>
        <begin position="948"/>
        <end position="1004"/>
    </location>
</feature>
<feature type="region of interest" description="Disordered" evidence="3">
    <location>
        <begin position="288"/>
        <end position="680"/>
    </location>
</feature>
<feature type="region of interest" description="Triple-helical region 1 (COL1)">
    <location>
        <begin position="292"/>
        <end position="351"/>
    </location>
</feature>
<feature type="region of interest" description="Triple-helical region 2 (COL2)">
    <location>
        <begin position="370"/>
        <end position="429"/>
    </location>
</feature>
<feature type="region of interest" description="Triple-helical region 3 (COL3)">
    <location>
        <begin position="448"/>
        <end position="688"/>
    </location>
</feature>
<feature type="region of interest" description="Triple-helical region 4 (COL4)">
    <location>
        <begin position="700"/>
        <end position="818"/>
    </location>
</feature>
<feature type="region of interest" description="Disordered" evidence="3">
    <location>
        <begin position="704"/>
        <end position="1009"/>
    </location>
</feature>
<feature type="region of interest" description="Triple-helical region 5 (COL5)">
    <location>
        <begin position="833"/>
        <end position="1012"/>
    </location>
</feature>
<feature type="region of interest" description="Disordered" evidence="3">
    <location>
        <begin position="1053"/>
        <end position="1142"/>
    </location>
</feature>
<feature type="region of interest" description="Triple-helical region 6 (COL6)">
    <location>
        <begin position="1054"/>
        <end position="1111"/>
    </location>
</feature>
<feature type="short sequence motif" description="Cell attachment site" evidence="2">
    <location>
        <begin position="952"/>
        <end position="954"/>
    </location>
</feature>
<feature type="compositionally biased region" description="Basic and acidic residues" evidence="3">
    <location>
        <begin position="335"/>
        <end position="350"/>
    </location>
</feature>
<feature type="compositionally biased region" description="Low complexity" evidence="3">
    <location>
        <begin position="390"/>
        <end position="404"/>
    </location>
</feature>
<feature type="compositionally biased region" description="Pro residues" evidence="3">
    <location>
        <begin position="417"/>
        <end position="429"/>
    </location>
</feature>
<feature type="compositionally biased region" description="Basic and acidic residues" evidence="3">
    <location>
        <begin position="444"/>
        <end position="463"/>
    </location>
</feature>
<feature type="compositionally biased region" description="Basic and acidic residues" evidence="3">
    <location>
        <begin position="478"/>
        <end position="496"/>
    </location>
</feature>
<feature type="compositionally biased region" description="Low complexity" evidence="3">
    <location>
        <begin position="640"/>
        <end position="651"/>
    </location>
</feature>
<feature type="compositionally biased region" description="Basic and acidic residues" evidence="3">
    <location>
        <begin position="720"/>
        <end position="731"/>
    </location>
</feature>
<feature type="compositionally biased region" description="Basic and acidic residues" evidence="3">
    <location>
        <begin position="743"/>
        <end position="752"/>
    </location>
</feature>
<feature type="compositionally biased region" description="Pro residues" evidence="3">
    <location>
        <begin position="806"/>
        <end position="817"/>
    </location>
</feature>
<feature type="compositionally biased region" description="Pro residues" evidence="3">
    <location>
        <begin position="840"/>
        <end position="852"/>
    </location>
</feature>
<feature type="compositionally biased region" description="Basic and acidic residues" evidence="3">
    <location>
        <begin position="943"/>
        <end position="954"/>
    </location>
</feature>
<feature type="compositionally biased region" description="Low complexity" evidence="3">
    <location>
        <begin position="1093"/>
        <end position="1107"/>
    </location>
</feature>
<feature type="compositionally biased region" description="Pro residues" evidence="3">
    <location>
        <begin position="1108"/>
        <end position="1119"/>
    </location>
</feature>
<feature type="sequence variant" id="VAR_024419" description="In dbSNP:rs2273426.">
    <original>A</original>
    <variation>G</variation>
    <location>
        <position position="352"/>
    </location>
</feature>
<feature type="sequence variant" id="VAR_035746" description="In a breast cancer sample; somatic mutation; dbSNP:rs1313704586." evidence="5">
    <original>G</original>
    <variation>D</variation>
    <location>
        <position position="361"/>
    </location>
</feature>
<feature type="sequence variant" id="VAR_048782" description="In dbSNP:rs13204209.">
    <original>G</original>
    <variation>E</variation>
    <location>
        <position position="406"/>
    </location>
</feature>
<feature type="sequence variant" id="VAR_048783" description="In dbSNP:rs13204209.">
    <original>E</original>
    <variation>G</variation>
    <location>
        <position position="496"/>
    </location>
</feature>
<feature type="sequence variant" id="VAR_035747" description="In a breast cancer sample; somatic mutation; dbSNP:rs771562232." evidence="5">
    <original>K</original>
    <variation>N</variation>
    <location>
        <position position="1019"/>
    </location>
</feature>
<feature type="sequence conflict" description="In Ref. 2; BAA23309." evidence="6" ref="2">
    <original>I</original>
    <variation>MY</variation>
    <location>
        <position position="89"/>
    </location>
</feature>
<feature type="sequence conflict" description="In Ref. 6; AAA36358." evidence="6" ref="6">
    <original>FRVRRNAKKERWFL</original>
    <variation>ETTVPFWRFFVLET</variation>
    <location>
        <begin position="106"/>
        <end position="119"/>
    </location>
</feature>
<feature type="sequence conflict" description="In Ref. 1; BAA07368." evidence="6" ref="1">
    <original>Q</original>
    <variation>L</variation>
    <location>
        <position position="279"/>
    </location>
</feature>
<feature type="sequence conflict" description="In Ref. 5; AAA58468." evidence="6" ref="5">
    <original>AG</original>
    <variation>GC</variation>
    <location>
        <begin position="354"/>
        <end position="355"/>
    </location>
</feature>
<feature type="sequence conflict" description="In Ref. 1; BAA07368 and 5; AAA58468." evidence="6" ref="1 5">
    <original>D</original>
    <variation>V</variation>
    <location>
        <position position="365"/>
    </location>
</feature>
<feature type="sequence conflict" description="In Ref. 1; BAA07368 and 5; AAA58468." evidence="6" ref="1 5">
    <original>YY</original>
    <variation>DD</variation>
    <location>
        <begin position="441"/>
        <end position="442"/>
    </location>
</feature>
<feature type="sequence conflict" description="In Ref. 5; AAA58468." evidence="6" ref="5">
    <original>PQG</original>
    <variation>QRD</variation>
    <location>
        <begin position="622"/>
        <end position="624"/>
    </location>
</feature>
<feature type="sequence conflict" description="In Ref. 6; AAA36358." evidence="6" ref="6">
    <original>GIPFNERN</original>
    <variation>VSCSRLKI</variation>
    <location>
        <begin position="816"/>
        <end position="823"/>
    </location>
</feature>
<feature type="sequence conflict" description="In Ref. 1; BAA07368." evidence="6" ref="1">
    <original>Q</original>
    <variation>E</variation>
    <location>
        <position position="937"/>
    </location>
</feature>
<feature type="sequence conflict" description="In Ref. 2; BAA23309." evidence="6" ref="2">
    <original>G</original>
    <variation>C</variation>
    <location>
        <position position="1140"/>
    </location>
</feature>
<keyword id="KW-0130">Cell adhesion</keyword>
<keyword id="KW-0176">Collagen</keyword>
<keyword id="KW-0217">Developmental protein</keyword>
<keyword id="KW-0221">Differentiation</keyword>
<keyword id="KW-1015">Disulfide bond</keyword>
<keyword id="KW-0272">Extracellular matrix</keyword>
<keyword id="KW-0379">Hydroxylation</keyword>
<keyword id="KW-0517">Myogenesis</keyword>
<keyword id="KW-1267">Proteomics identification</keyword>
<keyword id="KW-1185">Reference proteome</keyword>
<keyword id="KW-0677">Repeat</keyword>
<keyword id="KW-0964">Secreted</keyword>
<keyword id="KW-0732">Signal</keyword>
<sequence length="1142" mass="115221">MRLTGPWKLWLWMSIFLLPASTSVTVRDKTEESCPILRIEGHQLTYDNINKLEVSGFDLGDSFSLRRAFCESDKTCFKLGSALLIRDTIKIFPKGLPEEYSVAAMFRVRRNAKKERWFLWQVLNQQNIPQISIVVDGGKKVVEFMFQATEGDVLNYIFRNRELRPLFDRQWHKLGISIQSQVISLYMDCNLIARRQTDEKDTVDFHGRTVIATRASDGKPVDIELHQLKIYCSANLIAQETCCEISDTKCPEQDGFGNIASSWVTAHASKMSSYLPAKQELKDQCQCIPNKGEAGLPGAPGSPGQKGHKGEPGENGLHGAPGFPGQKGEQGFEGSKGETGEKGEQGEKGDPALAGLNGENGLKGDLGPHGPPGPKGEKGDTGPPGPPALPGSLGIQGPQGPPGKEGQRGRRGKTGPPGKPGPPGPPGPPGIQGIHQTLGGYYNKDNKGNDEHEAGGLKGDKGETGLPGFPGSVGPKGQKGEPGEPFTKGEKGDRGEPGVIGSQGVKGEPGDPGPPGLIGSPGLKGQQGSAGSMGPRGPPGDVGLPGEHGIPGKQGIKGEKGDPGGIIGPPGLPGPKGEAGPPGKSLPGEPGLDGNPGAPGPRGPKGERGLPGVHGSPGDIGPQGIGIPGRTGAQGPAGEPGIQGPRGLPGLPGTPGTPGNDGVPGRDGKPGLPGPPGDPIALPLLGDIGALLKNFCGNCQASVPGLKSNKGEEGGAGEPGKYDSMARKGDIGPRGPPGIPGREGPKGSKGERGYPGIPGEKGDEGLQGIPGIPGAPGPTGPPGLMGRTGHPGPTGAKGEKGSDGPPGKPGPPGPPGIPFNERNGMSSLYKIKGGVNVPSYPGPPGPPGPKGDPGPVGEPGAMGLPGLEGFPGVKGDRGPAGPPGIAGMSGKPGAPGPPGVPGEPGERGPVGDIGFPGPEGPSGKPGINGKDGIPGAQGIMGKPGDRGPKGERGDQGIPGDRGSQGERGKPGLTGMKGAIGPMGPPGNKGSMGSPGHQGPPGSPGIPGIPADAVSFEEIKKYINQEVLRIFEERMAVFLSQLKLPAAMLAAQAYGRPGPPGKDGLPGPPGDPGPQGYRGQKGERGEPGIGLPGSPGLPGTSALGLPGSPGAPGPQGPPGPSGRCNPEDCLYPVSHAHQRTGGN</sequence>
<gene>
    <name type="primary">COL19A1</name>
</gene>
<dbReference type="EMBL" id="D38163">
    <property type="protein sequence ID" value="BAA07368.1"/>
    <property type="molecule type" value="mRNA"/>
</dbReference>
<dbReference type="EMBL" id="AB004629">
    <property type="protein sequence ID" value="BAA23309.1"/>
    <property type="molecule type" value="Genomic_DNA"/>
</dbReference>
<dbReference type="EMBL" id="AL118519">
    <property type="status" value="NOT_ANNOTATED_CDS"/>
    <property type="molecule type" value="Genomic_DNA"/>
</dbReference>
<dbReference type="EMBL" id="AL133388">
    <property type="status" value="NOT_ANNOTATED_CDS"/>
    <property type="molecule type" value="Genomic_DNA"/>
</dbReference>
<dbReference type="EMBL" id="AL136445">
    <property type="status" value="NOT_ANNOTATED_CDS"/>
    <property type="molecule type" value="Genomic_DNA"/>
</dbReference>
<dbReference type="EMBL" id="AL160262">
    <property type="status" value="NOT_ANNOTATED_CDS"/>
    <property type="molecule type" value="Genomic_DNA"/>
</dbReference>
<dbReference type="EMBL" id="AL359539">
    <property type="status" value="NOT_ANNOTATED_CDS"/>
    <property type="molecule type" value="Genomic_DNA"/>
</dbReference>
<dbReference type="EMBL" id="BC113362">
    <property type="protein sequence ID" value="AAI13363.1"/>
    <property type="molecule type" value="mRNA"/>
</dbReference>
<dbReference type="EMBL" id="BC113364">
    <property type="protein sequence ID" value="AAI13365.1"/>
    <property type="molecule type" value="mRNA"/>
</dbReference>
<dbReference type="EMBL" id="M63597">
    <property type="protein sequence ID" value="AAA58468.1"/>
    <property type="molecule type" value="mRNA"/>
</dbReference>
<dbReference type="EMBL" id="L12347">
    <property type="protein sequence ID" value="AAA36358.1"/>
    <property type="molecule type" value="mRNA"/>
</dbReference>
<dbReference type="EMBL" id="U09279">
    <property type="protein sequence ID" value="AAA21146.1"/>
    <property type="molecule type" value="mRNA"/>
</dbReference>
<dbReference type="EMBL" id="AH000850">
    <property type="protein sequence ID" value="AAA21147.1"/>
    <property type="molecule type" value="Genomic_DNA"/>
</dbReference>
<dbReference type="CCDS" id="CCDS4970.1"/>
<dbReference type="PIR" id="JX0369">
    <property type="entry name" value="JX0369"/>
</dbReference>
<dbReference type="RefSeq" id="NP_001849.2">
    <property type="nucleotide sequence ID" value="NM_001858.5"/>
</dbReference>
<dbReference type="RefSeq" id="XP_011533740.1">
    <property type="nucleotide sequence ID" value="XM_011535438.2"/>
</dbReference>
<dbReference type="RefSeq" id="XP_016865744.1">
    <property type="nucleotide sequence ID" value="XM_017010255.1"/>
</dbReference>
<dbReference type="BioGRID" id="107705">
    <property type="interactions" value="1"/>
</dbReference>
<dbReference type="ComplexPortal" id="CPX-1760">
    <property type="entry name" value="Collagen type XIX trimer"/>
</dbReference>
<dbReference type="FunCoup" id="Q14993">
    <property type="interactions" value="145"/>
</dbReference>
<dbReference type="IntAct" id="Q14993">
    <property type="interactions" value="1"/>
</dbReference>
<dbReference type="STRING" id="9606.ENSP00000480474"/>
<dbReference type="GlyGen" id="Q14993">
    <property type="glycosylation" value="7 sites, 2 O-linked glycans (4 sites)"/>
</dbReference>
<dbReference type="iPTMnet" id="Q14993"/>
<dbReference type="PhosphoSitePlus" id="Q14993"/>
<dbReference type="BioMuta" id="COL19A1"/>
<dbReference type="DMDM" id="68840003"/>
<dbReference type="jPOST" id="Q14993"/>
<dbReference type="MassIVE" id="Q14993"/>
<dbReference type="PaxDb" id="9606-ENSP00000480474"/>
<dbReference type="PeptideAtlas" id="Q14993"/>
<dbReference type="ProteomicsDB" id="60277"/>
<dbReference type="Antibodypedia" id="31201">
    <property type="antibodies" value="199 antibodies from 27 providers"/>
</dbReference>
<dbReference type="DNASU" id="1310"/>
<dbReference type="Ensembl" id="ENST00000620364.5">
    <property type="protein sequence ID" value="ENSP00000480474.1"/>
    <property type="gene ID" value="ENSG00000082293.13"/>
</dbReference>
<dbReference type="GeneID" id="1310"/>
<dbReference type="KEGG" id="hsa:1310"/>
<dbReference type="MANE-Select" id="ENST00000620364.5">
    <property type="protein sequence ID" value="ENSP00000480474.1"/>
    <property type="RefSeq nucleotide sequence ID" value="NM_001858.6"/>
    <property type="RefSeq protein sequence ID" value="NP_001849.2"/>
</dbReference>
<dbReference type="UCSC" id="uc032xam.2">
    <property type="organism name" value="human"/>
</dbReference>
<dbReference type="AGR" id="HGNC:2196"/>
<dbReference type="CTD" id="1310"/>
<dbReference type="DisGeNET" id="1310"/>
<dbReference type="GeneCards" id="COL19A1"/>
<dbReference type="HGNC" id="HGNC:2196">
    <property type="gene designation" value="COL19A1"/>
</dbReference>
<dbReference type="HPA" id="ENSG00000082293">
    <property type="expression patterns" value="Tissue enhanced (brain, lymphoid tissue, urinary bladder)"/>
</dbReference>
<dbReference type="MIM" id="120165">
    <property type="type" value="gene"/>
</dbReference>
<dbReference type="neXtProt" id="NX_Q14993"/>
<dbReference type="OpenTargets" id="ENSG00000082293"/>
<dbReference type="PharmGKB" id="PA26712"/>
<dbReference type="VEuPathDB" id="HostDB:ENSG00000082293"/>
<dbReference type="eggNOG" id="KOG3544">
    <property type="taxonomic scope" value="Eukaryota"/>
</dbReference>
<dbReference type="GeneTree" id="ENSGT00940000158276"/>
<dbReference type="HOGENOM" id="CLU_282267_0_0_1"/>
<dbReference type="InParanoid" id="Q14993"/>
<dbReference type="OMA" id="FMFQATE"/>
<dbReference type="OrthoDB" id="5983381at2759"/>
<dbReference type="PAN-GO" id="Q14993">
    <property type="GO annotations" value="4 GO annotations based on evolutionary models"/>
</dbReference>
<dbReference type="PhylomeDB" id="Q14993"/>
<dbReference type="TreeFam" id="TF351778"/>
<dbReference type="PathwayCommons" id="Q14993"/>
<dbReference type="Reactome" id="R-HSA-1442490">
    <property type="pathway name" value="Collagen degradation"/>
</dbReference>
<dbReference type="Reactome" id="R-HSA-1650814">
    <property type="pathway name" value="Collagen biosynthesis and modifying enzymes"/>
</dbReference>
<dbReference type="Reactome" id="R-HSA-8948216">
    <property type="pathway name" value="Collagen chain trimerization"/>
</dbReference>
<dbReference type="SignaLink" id="Q14993"/>
<dbReference type="BioGRID-ORCS" id="1310">
    <property type="hits" value="12 hits in 1149 CRISPR screens"/>
</dbReference>
<dbReference type="ChiTaRS" id="COL19A1">
    <property type="organism name" value="human"/>
</dbReference>
<dbReference type="GeneWiki" id="Collagen,_type_XIX,_alpha_1"/>
<dbReference type="GenomeRNAi" id="1310"/>
<dbReference type="Pharos" id="Q14993">
    <property type="development level" value="Tbio"/>
</dbReference>
<dbReference type="PRO" id="PR:Q14993"/>
<dbReference type="Proteomes" id="UP000005640">
    <property type="component" value="Chromosome 6"/>
</dbReference>
<dbReference type="RNAct" id="Q14993">
    <property type="molecule type" value="protein"/>
</dbReference>
<dbReference type="Bgee" id="ENSG00000082293">
    <property type="expression patterns" value="Expressed in male germ line stem cell (sensu Vertebrata) in testis and 110 other cell types or tissues"/>
</dbReference>
<dbReference type="ExpressionAtlas" id="Q14993">
    <property type="expression patterns" value="baseline and differential"/>
</dbReference>
<dbReference type="GO" id="GO:0005581">
    <property type="term" value="C:collagen trimer"/>
    <property type="evidence" value="ECO:0000304"/>
    <property type="project" value="ProtInc"/>
</dbReference>
<dbReference type="GO" id="GO:0062023">
    <property type="term" value="C:collagen-containing extracellular matrix"/>
    <property type="evidence" value="ECO:0007005"/>
    <property type="project" value="BHF-UCL"/>
</dbReference>
<dbReference type="GO" id="GO:0005788">
    <property type="term" value="C:endoplasmic reticulum lumen"/>
    <property type="evidence" value="ECO:0000304"/>
    <property type="project" value="Reactome"/>
</dbReference>
<dbReference type="GO" id="GO:0031012">
    <property type="term" value="C:extracellular matrix"/>
    <property type="evidence" value="ECO:0000303"/>
    <property type="project" value="UniProtKB"/>
</dbReference>
<dbReference type="GO" id="GO:0005576">
    <property type="term" value="C:extracellular region"/>
    <property type="evidence" value="ECO:0000304"/>
    <property type="project" value="Reactome"/>
</dbReference>
<dbReference type="GO" id="GO:0005615">
    <property type="term" value="C:extracellular space"/>
    <property type="evidence" value="ECO:0000318"/>
    <property type="project" value="GO_Central"/>
</dbReference>
<dbReference type="GO" id="GO:0005201">
    <property type="term" value="F:extracellular matrix structural constituent"/>
    <property type="evidence" value="ECO:0000303"/>
    <property type="project" value="UniProtKB"/>
</dbReference>
<dbReference type="GO" id="GO:0030020">
    <property type="term" value="F:extracellular matrix structural constituent conferring tensile strength"/>
    <property type="evidence" value="ECO:0000318"/>
    <property type="project" value="GO_Central"/>
</dbReference>
<dbReference type="GO" id="GO:0030674">
    <property type="term" value="F:protein-macromolecule adaptor activity"/>
    <property type="evidence" value="ECO:0000303"/>
    <property type="project" value="UniProtKB"/>
</dbReference>
<dbReference type="GO" id="GO:0007155">
    <property type="term" value="P:cell adhesion"/>
    <property type="evidence" value="ECO:0000303"/>
    <property type="project" value="UniProtKB"/>
</dbReference>
<dbReference type="GO" id="GO:0030154">
    <property type="term" value="P:cell differentiation"/>
    <property type="evidence" value="ECO:0007669"/>
    <property type="project" value="UniProtKB-KW"/>
</dbReference>
<dbReference type="GO" id="GO:0098609">
    <property type="term" value="P:cell-cell adhesion"/>
    <property type="evidence" value="ECO:0000303"/>
    <property type="project" value="UniProtKB"/>
</dbReference>
<dbReference type="GO" id="GO:0030198">
    <property type="term" value="P:extracellular matrix organization"/>
    <property type="evidence" value="ECO:0000303"/>
    <property type="project" value="UniProtKB"/>
</dbReference>
<dbReference type="GO" id="GO:0007519">
    <property type="term" value="P:skeletal muscle tissue development"/>
    <property type="evidence" value="ECO:0007669"/>
    <property type="project" value="Ensembl"/>
</dbReference>
<dbReference type="GO" id="GO:0001501">
    <property type="term" value="P:skeletal system development"/>
    <property type="evidence" value="ECO:0000304"/>
    <property type="project" value="ProtInc"/>
</dbReference>
<dbReference type="FunFam" id="2.60.120.200:FF:000148">
    <property type="entry name" value="Collagen, type XIX, alpha 1"/>
    <property type="match status" value="1"/>
</dbReference>
<dbReference type="Gene3D" id="2.60.120.200">
    <property type="match status" value="1"/>
</dbReference>
<dbReference type="InterPro" id="IPR008160">
    <property type="entry name" value="Collagen"/>
</dbReference>
<dbReference type="InterPro" id="IPR050149">
    <property type="entry name" value="Collagen_superfamily"/>
</dbReference>
<dbReference type="InterPro" id="IPR013320">
    <property type="entry name" value="ConA-like_dom_sf"/>
</dbReference>
<dbReference type="InterPro" id="IPR048287">
    <property type="entry name" value="TSPN-like_N"/>
</dbReference>
<dbReference type="PANTHER" id="PTHR24023">
    <property type="entry name" value="COLLAGEN ALPHA"/>
    <property type="match status" value="1"/>
</dbReference>
<dbReference type="PANTHER" id="PTHR24023:SF1082">
    <property type="entry name" value="COLLAGEN TRIPLE HELIX REPEAT"/>
    <property type="match status" value="1"/>
</dbReference>
<dbReference type="Pfam" id="PF01391">
    <property type="entry name" value="Collagen"/>
    <property type="match status" value="10"/>
</dbReference>
<dbReference type="SMART" id="SM00210">
    <property type="entry name" value="TSPN"/>
    <property type="match status" value="1"/>
</dbReference>
<dbReference type="SUPFAM" id="SSF49899">
    <property type="entry name" value="Concanavalin A-like lectins/glucanases"/>
    <property type="match status" value="1"/>
</dbReference>
<evidence type="ECO:0000250" key="1"/>
<evidence type="ECO:0000255" key="2"/>
<evidence type="ECO:0000256" key="3">
    <source>
        <dbReference type="SAM" id="MobiDB-lite"/>
    </source>
</evidence>
<evidence type="ECO:0000269" key="4">
    <source>
    </source>
</evidence>
<evidence type="ECO:0000269" key="5">
    <source>
    </source>
</evidence>
<evidence type="ECO:0000305" key="6"/>